<name>RL3_FRATM</name>
<keyword id="KW-0488">Methylation</keyword>
<keyword id="KW-0687">Ribonucleoprotein</keyword>
<keyword id="KW-0689">Ribosomal protein</keyword>
<keyword id="KW-0694">RNA-binding</keyword>
<keyword id="KW-0699">rRNA-binding</keyword>
<evidence type="ECO:0000255" key="1">
    <source>
        <dbReference type="HAMAP-Rule" id="MF_01325"/>
    </source>
</evidence>
<evidence type="ECO:0000256" key="2">
    <source>
        <dbReference type="SAM" id="MobiDB-lite"/>
    </source>
</evidence>
<evidence type="ECO:0000305" key="3"/>
<feature type="chain" id="PRO_1000141872" description="Large ribosomal subunit protein uL3">
    <location>
        <begin position="1"/>
        <end position="210"/>
    </location>
</feature>
<feature type="region of interest" description="Disordered" evidence="2">
    <location>
        <begin position="133"/>
        <end position="152"/>
    </location>
</feature>
<feature type="modified residue" description="N5-methylglutamine" evidence="1">
    <location>
        <position position="151"/>
    </location>
</feature>
<dbReference type="EMBL" id="CP000915">
    <property type="protein sequence ID" value="ACD31349.1"/>
    <property type="molecule type" value="Genomic_DNA"/>
</dbReference>
<dbReference type="SMR" id="B2SDY5"/>
<dbReference type="KEGG" id="ftm:FTM_1527"/>
<dbReference type="HOGENOM" id="CLU_044142_4_1_6"/>
<dbReference type="GO" id="GO:0022625">
    <property type="term" value="C:cytosolic large ribosomal subunit"/>
    <property type="evidence" value="ECO:0007669"/>
    <property type="project" value="TreeGrafter"/>
</dbReference>
<dbReference type="GO" id="GO:0019843">
    <property type="term" value="F:rRNA binding"/>
    <property type="evidence" value="ECO:0007669"/>
    <property type="project" value="UniProtKB-UniRule"/>
</dbReference>
<dbReference type="GO" id="GO:0003735">
    <property type="term" value="F:structural constituent of ribosome"/>
    <property type="evidence" value="ECO:0007669"/>
    <property type="project" value="InterPro"/>
</dbReference>
<dbReference type="GO" id="GO:0006412">
    <property type="term" value="P:translation"/>
    <property type="evidence" value="ECO:0007669"/>
    <property type="project" value="UniProtKB-UniRule"/>
</dbReference>
<dbReference type="FunFam" id="2.40.30.10:FF:000004">
    <property type="entry name" value="50S ribosomal protein L3"/>
    <property type="match status" value="1"/>
</dbReference>
<dbReference type="FunFam" id="3.30.160.810:FF:000001">
    <property type="entry name" value="50S ribosomal protein L3"/>
    <property type="match status" value="1"/>
</dbReference>
<dbReference type="Gene3D" id="3.30.160.810">
    <property type="match status" value="1"/>
</dbReference>
<dbReference type="Gene3D" id="2.40.30.10">
    <property type="entry name" value="Translation factors"/>
    <property type="match status" value="1"/>
</dbReference>
<dbReference type="HAMAP" id="MF_01325_B">
    <property type="entry name" value="Ribosomal_uL3_B"/>
    <property type="match status" value="1"/>
</dbReference>
<dbReference type="InterPro" id="IPR000597">
    <property type="entry name" value="Ribosomal_uL3"/>
</dbReference>
<dbReference type="InterPro" id="IPR019927">
    <property type="entry name" value="Ribosomal_uL3_bac/org-type"/>
</dbReference>
<dbReference type="InterPro" id="IPR019926">
    <property type="entry name" value="Ribosomal_uL3_CS"/>
</dbReference>
<dbReference type="InterPro" id="IPR009000">
    <property type="entry name" value="Transl_B-barrel_sf"/>
</dbReference>
<dbReference type="NCBIfam" id="TIGR03625">
    <property type="entry name" value="L3_bact"/>
    <property type="match status" value="1"/>
</dbReference>
<dbReference type="PANTHER" id="PTHR11229">
    <property type="entry name" value="50S RIBOSOMAL PROTEIN L3"/>
    <property type="match status" value="1"/>
</dbReference>
<dbReference type="PANTHER" id="PTHR11229:SF16">
    <property type="entry name" value="LARGE RIBOSOMAL SUBUNIT PROTEIN UL3C"/>
    <property type="match status" value="1"/>
</dbReference>
<dbReference type="Pfam" id="PF00297">
    <property type="entry name" value="Ribosomal_L3"/>
    <property type="match status" value="1"/>
</dbReference>
<dbReference type="SUPFAM" id="SSF50447">
    <property type="entry name" value="Translation proteins"/>
    <property type="match status" value="1"/>
</dbReference>
<dbReference type="PROSITE" id="PS00474">
    <property type="entry name" value="RIBOSOMAL_L3"/>
    <property type="match status" value="1"/>
</dbReference>
<proteinExistence type="inferred from homology"/>
<gene>
    <name evidence="1" type="primary">rplC</name>
    <name type="ordered locus">FTM_1527</name>
</gene>
<sequence length="210" mass="22307">MSLGLVGRKCGMTRIFTEDGVSIPVTVVQVEPNKVTQVKTVEKDGYNAIQVTTGFKKRSNVNKPMAGHYAKASVEPGRGLWEFTVDAAAEYQVGSSFDATMFEAGQKVDVRGVSKGKGFQGGVKRHNFATQDATHGNSLSHRVHGSTGQNQTPGRVFKNKKMAGHLGNENVTIQSLEVVRVDAENGLLLLKGGIPGSVGGDIIVTPAVKS</sequence>
<accession>B2SDY5</accession>
<comment type="function">
    <text evidence="1">One of the primary rRNA binding proteins, it binds directly near the 3'-end of the 23S rRNA, where it nucleates assembly of the 50S subunit.</text>
</comment>
<comment type="subunit">
    <text evidence="1">Part of the 50S ribosomal subunit. Forms a cluster with proteins L14 and L19.</text>
</comment>
<comment type="PTM">
    <text evidence="1">Methylated by PrmB.</text>
</comment>
<comment type="similarity">
    <text evidence="1">Belongs to the universal ribosomal protein uL3 family.</text>
</comment>
<reference key="1">
    <citation type="journal article" date="2009" name="PLoS Pathog.">
        <title>Molecular evolutionary consequences of niche restriction in Francisella tularensis, a facultative intracellular pathogen.</title>
        <authorList>
            <person name="Larsson P."/>
            <person name="Elfsmark D."/>
            <person name="Svensson K."/>
            <person name="Wikstroem P."/>
            <person name="Forsman M."/>
            <person name="Brettin T."/>
            <person name="Keim P."/>
            <person name="Johansson A."/>
        </authorList>
    </citation>
    <scope>NUCLEOTIDE SEQUENCE [LARGE SCALE GENOMIC DNA]</scope>
    <source>
        <strain>FSC147</strain>
    </source>
</reference>
<organism>
    <name type="scientific">Francisella tularensis subsp. mediasiatica (strain FSC147)</name>
    <dbReference type="NCBI Taxonomy" id="441952"/>
    <lineage>
        <taxon>Bacteria</taxon>
        <taxon>Pseudomonadati</taxon>
        <taxon>Pseudomonadota</taxon>
        <taxon>Gammaproteobacteria</taxon>
        <taxon>Thiotrichales</taxon>
        <taxon>Francisellaceae</taxon>
        <taxon>Francisella</taxon>
    </lineage>
</organism>
<protein>
    <recommendedName>
        <fullName evidence="1">Large ribosomal subunit protein uL3</fullName>
    </recommendedName>
    <alternativeName>
        <fullName evidence="3">50S ribosomal protein L3</fullName>
    </alternativeName>
</protein>